<organism>
    <name type="scientific">Rhizobium meliloti (strain 1021)</name>
    <name type="common">Ensifer meliloti</name>
    <name type="synonym">Sinorhizobium meliloti</name>
    <dbReference type="NCBI Taxonomy" id="266834"/>
    <lineage>
        <taxon>Bacteria</taxon>
        <taxon>Pseudomonadati</taxon>
        <taxon>Pseudomonadota</taxon>
        <taxon>Alphaproteobacteria</taxon>
        <taxon>Hyphomicrobiales</taxon>
        <taxon>Rhizobiaceae</taxon>
        <taxon>Sinorhizobium/Ensifer group</taxon>
        <taxon>Sinorhizobium</taxon>
    </lineage>
</organism>
<keyword id="KW-0066">ATP synthesis</keyword>
<keyword id="KW-0418">Kinase</keyword>
<keyword id="KW-0614">Plasmid</keyword>
<keyword id="KW-1185">Reference proteome</keyword>
<keyword id="KW-0808">Transferase</keyword>
<protein>
    <recommendedName>
        <fullName evidence="3">ADP-polyphosphate phosphotransferase 3</fullName>
        <ecNumber evidence="2">2.7.4.-</ecNumber>
    </recommendedName>
    <alternativeName>
        <fullName evidence="3">Polyphosphate kinase PPK2 3</fullName>
    </alternativeName>
</protein>
<proteinExistence type="evidence at protein level"/>
<reference key="1">
    <citation type="journal article" date="2001" name="Proc. Natl. Acad. Sci. U.S.A.">
        <title>Nucleotide sequence and predicted functions of the entire Sinorhizobium meliloti pSymA megaplasmid.</title>
        <authorList>
            <person name="Barnett M.J."/>
            <person name="Fisher R.F."/>
            <person name="Jones T."/>
            <person name="Komp C."/>
            <person name="Abola A.P."/>
            <person name="Barloy-Hubler F."/>
            <person name="Bowser L."/>
            <person name="Capela D."/>
            <person name="Galibert F."/>
            <person name="Gouzy J."/>
            <person name="Gurjal M."/>
            <person name="Hong A."/>
            <person name="Huizar L."/>
            <person name="Hyman R.W."/>
            <person name="Kahn D."/>
            <person name="Kahn M.L."/>
            <person name="Kalman S."/>
            <person name="Keating D.H."/>
            <person name="Palm C."/>
            <person name="Peck M.C."/>
            <person name="Surzycki R."/>
            <person name="Wells D.H."/>
            <person name="Yeh K.-C."/>
            <person name="Davis R.W."/>
            <person name="Federspiel N.A."/>
            <person name="Long S.R."/>
        </authorList>
    </citation>
    <scope>NUCLEOTIDE SEQUENCE [LARGE SCALE GENOMIC DNA]</scope>
    <source>
        <strain>1021</strain>
    </source>
</reference>
<reference key="2">
    <citation type="journal article" date="2001" name="Science">
        <title>The composite genome of the legume symbiont Sinorhizobium meliloti.</title>
        <authorList>
            <person name="Galibert F."/>
            <person name="Finan T.M."/>
            <person name="Long S.R."/>
            <person name="Puehler A."/>
            <person name="Abola P."/>
            <person name="Ampe F."/>
            <person name="Barloy-Hubler F."/>
            <person name="Barnett M.J."/>
            <person name="Becker A."/>
            <person name="Boistard P."/>
            <person name="Bothe G."/>
            <person name="Boutry M."/>
            <person name="Bowser L."/>
            <person name="Buhrmester J."/>
            <person name="Cadieu E."/>
            <person name="Capela D."/>
            <person name="Chain P."/>
            <person name="Cowie A."/>
            <person name="Davis R.W."/>
            <person name="Dreano S."/>
            <person name="Federspiel N.A."/>
            <person name="Fisher R.F."/>
            <person name="Gloux S."/>
            <person name="Godrie T."/>
            <person name="Goffeau A."/>
            <person name="Golding B."/>
            <person name="Gouzy J."/>
            <person name="Gurjal M."/>
            <person name="Hernandez-Lucas I."/>
            <person name="Hong A."/>
            <person name="Huizar L."/>
            <person name="Hyman R.W."/>
            <person name="Jones T."/>
            <person name="Kahn D."/>
            <person name="Kahn M.L."/>
            <person name="Kalman S."/>
            <person name="Keating D.H."/>
            <person name="Kiss E."/>
            <person name="Komp C."/>
            <person name="Lelaure V."/>
            <person name="Masuy D."/>
            <person name="Palm C."/>
            <person name="Peck M.C."/>
            <person name="Pohl T.M."/>
            <person name="Portetelle D."/>
            <person name="Purnelle B."/>
            <person name="Ramsperger U."/>
            <person name="Surzycki R."/>
            <person name="Thebault P."/>
            <person name="Vandenbol M."/>
            <person name="Vorhoelter F.J."/>
            <person name="Weidner S."/>
            <person name="Wells D.H."/>
            <person name="Wong K."/>
            <person name="Yeh K.-C."/>
            <person name="Batut J."/>
        </authorList>
    </citation>
    <scope>NUCLEOTIDE SEQUENCE [LARGE SCALE GENOMIC DNA]</scope>
    <source>
        <strain>1021</strain>
    </source>
</reference>
<reference key="3">
    <citation type="journal article" date="2008" name="Proc. Natl. Acad. Sci. U.S.A.">
        <title>Polyphosphate-dependent synthesis of ATP and ADP by the family-2 polyphosphate kinases in bacteria.</title>
        <authorList>
            <person name="Nocek B."/>
            <person name="Kochinyan S."/>
            <person name="Proudfoot M."/>
            <person name="Brown G."/>
            <person name="Evdokimova E."/>
            <person name="Osipiuk J."/>
            <person name="Edwards A.M."/>
            <person name="Savchenko A."/>
            <person name="Joachimiak A."/>
            <person name="Yakunin A.F."/>
        </authorList>
    </citation>
    <scope>FUNCTION</scope>
    <scope>CATALYTIC ACTIVITY</scope>
</reference>
<dbReference type="EC" id="2.7.4.-" evidence="2"/>
<dbReference type="EMBL" id="AE006469">
    <property type="protein sequence ID" value="AAK65012.1"/>
    <property type="molecule type" value="Genomic_DNA"/>
</dbReference>
<dbReference type="PIR" id="B95306">
    <property type="entry name" value="B95306"/>
</dbReference>
<dbReference type="RefSeq" id="NP_435600.1">
    <property type="nucleotide sequence ID" value="NC_003037.1"/>
</dbReference>
<dbReference type="SMR" id="Q92ZU4"/>
<dbReference type="EnsemblBacteria" id="AAK65012">
    <property type="protein sequence ID" value="AAK65012"/>
    <property type="gene ID" value="SMa0670"/>
</dbReference>
<dbReference type="KEGG" id="sme:SMa0670"/>
<dbReference type="PATRIC" id="fig|266834.11.peg.371"/>
<dbReference type="HOGENOM" id="CLU_048699_3_0_5"/>
<dbReference type="OrthoDB" id="9775224at2"/>
<dbReference type="Proteomes" id="UP000001976">
    <property type="component" value="Plasmid pSymA"/>
</dbReference>
<dbReference type="GO" id="GO:0008976">
    <property type="term" value="F:polyphosphate kinase activity"/>
    <property type="evidence" value="ECO:0007669"/>
    <property type="project" value="UniProtKB-EC"/>
</dbReference>
<dbReference type="GO" id="GO:0006754">
    <property type="term" value="P:ATP biosynthetic process"/>
    <property type="evidence" value="ECO:0007669"/>
    <property type="project" value="UniProtKB-KW"/>
</dbReference>
<dbReference type="Gene3D" id="3.40.50.300">
    <property type="entry name" value="P-loop containing nucleotide triphosphate hydrolases"/>
    <property type="match status" value="1"/>
</dbReference>
<dbReference type="InterPro" id="IPR027417">
    <property type="entry name" value="P-loop_NTPase"/>
</dbReference>
<dbReference type="InterPro" id="IPR016898">
    <property type="entry name" value="Polyphosphate_phosphotransfera"/>
</dbReference>
<dbReference type="InterPro" id="IPR022488">
    <property type="entry name" value="PPK2-related"/>
</dbReference>
<dbReference type="InterPro" id="IPR022486">
    <property type="entry name" value="PPK2_PA0141"/>
</dbReference>
<dbReference type="NCBIfam" id="TIGR03707">
    <property type="entry name" value="PPK2_P_aer"/>
    <property type="match status" value="1"/>
</dbReference>
<dbReference type="PANTHER" id="PTHR34383:SF1">
    <property type="entry name" value="ADP-POLYPHOSPHATE PHOSPHOTRANSFERASE"/>
    <property type="match status" value="1"/>
</dbReference>
<dbReference type="PANTHER" id="PTHR34383">
    <property type="entry name" value="POLYPHOSPHATE:AMP PHOSPHOTRANSFERASE-RELATED"/>
    <property type="match status" value="1"/>
</dbReference>
<dbReference type="Pfam" id="PF03976">
    <property type="entry name" value="PPK2"/>
    <property type="match status" value="1"/>
</dbReference>
<dbReference type="PIRSF" id="PIRSF028756">
    <property type="entry name" value="PPK2_prd"/>
    <property type="match status" value="1"/>
</dbReference>
<dbReference type="SUPFAM" id="SSF52540">
    <property type="entry name" value="P-loop containing nucleoside triphosphate hydrolases"/>
    <property type="match status" value="1"/>
</dbReference>
<feature type="chain" id="PRO_0000442591" description="ADP-polyphosphate phosphotransferase 3">
    <location>
        <begin position="1"/>
        <end position="284"/>
    </location>
</feature>
<feature type="region of interest" description="Disordered" evidence="1">
    <location>
        <begin position="1"/>
        <end position="32"/>
    </location>
</feature>
<feature type="region of interest" description="Disordered" evidence="1">
    <location>
        <begin position="260"/>
        <end position="284"/>
    </location>
</feature>
<feature type="compositionally biased region" description="Basic and acidic residues" evidence="1">
    <location>
        <begin position="1"/>
        <end position="22"/>
    </location>
</feature>
<feature type="compositionally biased region" description="Basic and acidic residues" evidence="1">
    <location>
        <begin position="260"/>
        <end position="277"/>
    </location>
</feature>
<accession>Q92ZU4</accession>
<geneLocation type="plasmid">
    <name>pSymA</name>
    <name>megaplasmid 1</name>
</geneLocation>
<comment type="function">
    <text evidence="2">Uses inorganic polyphosphate (polyP) as a donor to convert ADP to ATP. Can also convert GDP to GTP, with lower efficiency.</text>
</comment>
<comment type="catalytic activity">
    <reaction evidence="2">
        <text>[phosphate](n) + ATP = [phosphate](n+1) + ADP</text>
        <dbReference type="Rhea" id="RHEA:19573"/>
        <dbReference type="Rhea" id="RHEA-COMP:9859"/>
        <dbReference type="Rhea" id="RHEA-COMP:14280"/>
        <dbReference type="ChEBI" id="CHEBI:16838"/>
        <dbReference type="ChEBI" id="CHEBI:30616"/>
        <dbReference type="ChEBI" id="CHEBI:456216"/>
    </reaction>
    <physiologicalReaction direction="right-to-left" evidence="2">
        <dbReference type="Rhea" id="RHEA:19575"/>
    </physiologicalReaction>
</comment>
<comment type="catalytic activity">
    <reaction evidence="2">
        <text>[phosphate](n) + GTP = [phosphate](n+1) + GDP</text>
        <dbReference type="Rhea" id="RHEA:55412"/>
        <dbReference type="Rhea" id="RHEA-COMP:9859"/>
        <dbReference type="Rhea" id="RHEA-COMP:14280"/>
        <dbReference type="ChEBI" id="CHEBI:16838"/>
        <dbReference type="ChEBI" id="CHEBI:37565"/>
        <dbReference type="ChEBI" id="CHEBI:58189"/>
    </reaction>
    <physiologicalReaction direction="right-to-left" evidence="2">
        <dbReference type="Rhea" id="RHEA:55414"/>
    </physiologicalReaction>
</comment>
<comment type="similarity">
    <text evidence="3">Belongs to the polyphosphate kinase 2 (PPK2) family. Class I subfamily.</text>
</comment>
<evidence type="ECO:0000256" key="1">
    <source>
        <dbReference type="SAM" id="MobiDB-lite"/>
    </source>
</evidence>
<evidence type="ECO:0000269" key="2">
    <source>
    </source>
</evidence>
<evidence type="ECO:0000305" key="3"/>
<evidence type="ECO:0000312" key="4">
    <source>
        <dbReference type="EMBL" id="AAK65012.1"/>
    </source>
</evidence>
<sequence length="284" mass="33401">MDKHTDDRKKNNHWKAEDRKSAATEASETRSGGNYAKELARLQEEIAHLQAWVKKTGARIVIVFEGRDAAGKGGVIKRITERVSPRVFRVVALPAPTDREKTQIYMQRYIQQFPAAGEVVIFDRSWYNRPGVERVMGFCSEKKAKRFLEIAPRFEAAMIESGIVLLKYFLDVSEEEQDRRFRQRINDPLRQWKLSPMDVESYRRWWDYTRAYDEMIRMTDTDDAPWWIVPSDNKKQARVNCIAHILSSIPYERVKFEDPDLGKRQKRPADFEGDTRRRTVPNLF</sequence>
<name>PK21C_RHIME</name>
<gene>
    <name evidence="3" type="ordered locus">RA0354</name>
    <name evidence="4" type="ORF">SMa0670</name>
</gene>